<feature type="chain" id="PRO_0000357396" description="Enolase-phosphatase E1">
    <location>
        <begin position="1"/>
        <end position="226"/>
    </location>
</feature>
<name>MTNC_SHEAM</name>
<protein>
    <recommendedName>
        <fullName evidence="1">Enolase-phosphatase E1</fullName>
        <ecNumber evidence="1">3.1.3.77</ecNumber>
    </recommendedName>
    <alternativeName>
        <fullName evidence="1">2,3-diketo-5-methylthio-1-phosphopentane phosphatase</fullName>
    </alternativeName>
</protein>
<proteinExistence type="inferred from homology"/>
<comment type="function">
    <text evidence="1">Bifunctional enzyme that catalyzes the enolization of 2,3-diketo-5-methylthiopentyl-1-phosphate (DK-MTP-1-P) into the intermediate 2-hydroxy-3-keto-5-methylthiopentenyl-1-phosphate (HK-MTPenyl-1-P), which is then dephosphorylated to form the acireductone 1,2-dihydroxy-3-keto-5-methylthiopentene (DHK-MTPene).</text>
</comment>
<comment type="catalytic activity">
    <reaction evidence="1">
        <text>5-methylsulfanyl-2,3-dioxopentyl phosphate + H2O = 1,2-dihydroxy-5-(methylsulfanyl)pent-1-en-3-one + phosphate</text>
        <dbReference type="Rhea" id="RHEA:21700"/>
        <dbReference type="ChEBI" id="CHEBI:15377"/>
        <dbReference type="ChEBI" id="CHEBI:43474"/>
        <dbReference type="ChEBI" id="CHEBI:49252"/>
        <dbReference type="ChEBI" id="CHEBI:58828"/>
        <dbReference type="EC" id="3.1.3.77"/>
    </reaction>
</comment>
<comment type="cofactor">
    <cofactor evidence="1">
        <name>Mg(2+)</name>
        <dbReference type="ChEBI" id="CHEBI:18420"/>
    </cofactor>
    <text evidence="1">Binds 1 Mg(2+) ion per subunit.</text>
</comment>
<comment type="pathway">
    <text evidence="1">Amino-acid biosynthesis; L-methionine biosynthesis via salvage pathway; L-methionine from S-methyl-5-thio-alpha-D-ribose 1-phosphate: step 3/6.</text>
</comment>
<comment type="pathway">
    <text evidence="1">Amino-acid biosynthesis; L-methionine biosynthesis via salvage pathway; L-methionine from S-methyl-5-thio-alpha-D-ribose 1-phosphate: step 4/6.</text>
</comment>
<comment type="subunit">
    <text evidence="1">Monomer.</text>
</comment>
<comment type="similarity">
    <text evidence="1">Belongs to the HAD-like hydrolase superfamily. MasA/MtnC family.</text>
</comment>
<gene>
    <name evidence="1" type="primary">mtnC</name>
    <name type="ordered locus">Sama_0074</name>
</gene>
<reference key="1">
    <citation type="submission" date="2006-12" db="EMBL/GenBank/DDBJ databases">
        <title>Complete sequence of Shewanella amazonensis SB2B.</title>
        <authorList>
            <consortium name="US DOE Joint Genome Institute"/>
            <person name="Copeland A."/>
            <person name="Lucas S."/>
            <person name="Lapidus A."/>
            <person name="Barry K."/>
            <person name="Detter J.C."/>
            <person name="Glavina del Rio T."/>
            <person name="Hammon N."/>
            <person name="Israni S."/>
            <person name="Dalin E."/>
            <person name="Tice H."/>
            <person name="Pitluck S."/>
            <person name="Munk A.C."/>
            <person name="Brettin T."/>
            <person name="Bruce D."/>
            <person name="Han C."/>
            <person name="Tapia R."/>
            <person name="Gilna P."/>
            <person name="Schmutz J."/>
            <person name="Larimer F."/>
            <person name="Land M."/>
            <person name="Hauser L."/>
            <person name="Kyrpides N."/>
            <person name="Mikhailova N."/>
            <person name="Fredrickson J."/>
            <person name="Richardson P."/>
        </authorList>
    </citation>
    <scope>NUCLEOTIDE SEQUENCE [LARGE SCALE GENOMIC DNA]</scope>
    <source>
        <strain>ATCC BAA-1098 / SB2B</strain>
    </source>
</reference>
<dbReference type="EC" id="3.1.3.77" evidence="1"/>
<dbReference type="EMBL" id="CP000507">
    <property type="protein sequence ID" value="ABL98286.1"/>
    <property type="molecule type" value="Genomic_DNA"/>
</dbReference>
<dbReference type="RefSeq" id="WP_011758197.1">
    <property type="nucleotide sequence ID" value="NC_008700.1"/>
</dbReference>
<dbReference type="SMR" id="A1S1N0"/>
<dbReference type="STRING" id="326297.Sama_0074"/>
<dbReference type="KEGG" id="saz:Sama_0074"/>
<dbReference type="eggNOG" id="COG4229">
    <property type="taxonomic scope" value="Bacteria"/>
</dbReference>
<dbReference type="HOGENOM" id="CLU_023273_0_0_6"/>
<dbReference type="OrthoDB" id="9797416at2"/>
<dbReference type="UniPathway" id="UPA00904">
    <property type="reaction ID" value="UER00876"/>
</dbReference>
<dbReference type="UniPathway" id="UPA00904">
    <property type="reaction ID" value="UER00877"/>
</dbReference>
<dbReference type="Proteomes" id="UP000009175">
    <property type="component" value="Chromosome"/>
</dbReference>
<dbReference type="GO" id="GO:0043715">
    <property type="term" value="F:2,3-diketo-5-methylthiopentyl-1-phosphate enolase activity"/>
    <property type="evidence" value="ECO:0007669"/>
    <property type="project" value="UniProtKB-UniRule"/>
</dbReference>
<dbReference type="GO" id="GO:0043716">
    <property type="term" value="F:2-hydroxy-3-keto-5-methylthiopentenyl-1-phosphate phosphatase activity"/>
    <property type="evidence" value="ECO:0007669"/>
    <property type="project" value="UniProtKB-UniRule"/>
</dbReference>
<dbReference type="GO" id="GO:0043874">
    <property type="term" value="F:acireductone synthase activity"/>
    <property type="evidence" value="ECO:0007669"/>
    <property type="project" value="UniProtKB-EC"/>
</dbReference>
<dbReference type="GO" id="GO:0000287">
    <property type="term" value="F:magnesium ion binding"/>
    <property type="evidence" value="ECO:0007669"/>
    <property type="project" value="UniProtKB-UniRule"/>
</dbReference>
<dbReference type="GO" id="GO:0019509">
    <property type="term" value="P:L-methionine salvage from methylthioadenosine"/>
    <property type="evidence" value="ECO:0007669"/>
    <property type="project" value="UniProtKB-UniRule"/>
</dbReference>
<dbReference type="CDD" id="cd01629">
    <property type="entry name" value="HAD_EP"/>
    <property type="match status" value="1"/>
</dbReference>
<dbReference type="Gene3D" id="1.10.720.60">
    <property type="match status" value="1"/>
</dbReference>
<dbReference type="Gene3D" id="3.40.50.1000">
    <property type="entry name" value="HAD superfamily/HAD-like"/>
    <property type="match status" value="1"/>
</dbReference>
<dbReference type="HAMAP" id="MF_01681">
    <property type="entry name" value="Salvage_MtnC"/>
    <property type="match status" value="1"/>
</dbReference>
<dbReference type="InterPro" id="IPR023943">
    <property type="entry name" value="Enolase-ppase_E1"/>
</dbReference>
<dbReference type="InterPro" id="IPR036412">
    <property type="entry name" value="HAD-like_sf"/>
</dbReference>
<dbReference type="InterPro" id="IPR006439">
    <property type="entry name" value="HAD-SF_hydro_IA"/>
</dbReference>
<dbReference type="InterPro" id="IPR023214">
    <property type="entry name" value="HAD_sf"/>
</dbReference>
<dbReference type="NCBIfam" id="TIGR01691">
    <property type="entry name" value="enolase-ppase"/>
    <property type="match status" value="1"/>
</dbReference>
<dbReference type="NCBIfam" id="TIGR01549">
    <property type="entry name" value="HAD-SF-IA-v1"/>
    <property type="match status" value="1"/>
</dbReference>
<dbReference type="PANTHER" id="PTHR20371">
    <property type="entry name" value="ENOLASE-PHOSPHATASE E1"/>
    <property type="match status" value="1"/>
</dbReference>
<dbReference type="PANTHER" id="PTHR20371:SF1">
    <property type="entry name" value="ENOLASE-PHOSPHATASE E1"/>
    <property type="match status" value="1"/>
</dbReference>
<dbReference type="Pfam" id="PF00702">
    <property type="entry name" value="Hydrolase"/>
    <property type="match status" value="1"/>
</dbReference>
<dbReference type="PRINTS" id="PR00413">
    <property type="entry name" value="HADHALOGNASE"/>
</dbReference>
<dbReference type="SFLD" id="SFLDG01129">
    <property type="entry name" value="C1.5:_HAD__Beta-PGM__Phosphata"/>
    <property type="match status" value="1"/>
</dbReference>
<dbReference type="SFLD" id="SFLDF00044">
    <property type="entry name" value="enolase-phosphatase"/>
    <property type="match status" value="1"/>
</dbReference>
<dbReference type="SUPFAM" id="SSF56784">
    <property type="entry name" value="HAD-like"/>
    <property type="match status" value="1"/>
</dbReference>
<organism>
    <name type="scientific">Shewanella amazonensis (strain ATCC BAA-1098 / SB2B)</name>
    <dbReference type="NCBI Taxonomy" id="326297"/>
    <lineage>
        <taxon>Bacteria</taxon>
        <taxon>Pseudomonadati</taxon>
        <taxon>Pseudomonadota</taxon>
        <taxon>Gammaproteobacteria</taxon>
        <taxon>Alteromonadales</taxon>
        <taxon>Shewanellaceae</taxon>
        <taxon>Shewanella</taxon>
    </lineage>
</organism>
<sequence>MGIRAIVVDTAGTTTDLNFIQQTLFPYSAKVMADFLREHQHNPLVDYCIGDVRDIALETDADIDRVAEILVQWIAEDRKVTPLKTLQGLIWKQGYANDEFKGHIYPDFIDAIKTYRAQGLRVYSFSSGSVDAQKLLFSHSDSGDLTELFNGHFDTRTGNKLDKQAYANIVNTISLTPRQILFVSDVVEELKAAEAAGMITCQMVREPSQRTGKYRIIQSFSELNFE</sequence>
<evidence type="ECO:0000255" key="1">
    <source>
        <dbReference type="HAMAP-Rule" id="MF_01681"/>
    </source>
</evidence>
<accession>A1S1N0</accession>
<keyword id="KW-0028">Amino-acid biosynthesis</keyword>
<keyword id="KW-0378">Hydrolase</keyword>
<keyword id="KW-0460">Magnesium</keyword>
<keyword id="KW-0479">Metal-binding</keyword>
<keyword id="KW-0486">Methionine biosynthesis</keyword>
<keyword id="KW-1185">Reference proteome</keyword>